<organism>
    <name type="scientific">Saccharomyces cerevisiae (strain ATCC 204508 / S288c)</name>
    <name type="common">Baker's yeast</name>
    <dbReference type="NCBI Taxonomy" id="559292"/>
    <lineage>
        <taxon>Eukaryota</taxon>
        <taxon>Fungi</taxon>
        <taxon>Dikarya</taxon>
        <taxon>Ascomycota</taxon>
        <taxon>Saccharomycotina</taxon>
        <taxon>Saccharomycetes</taxon>
        <taxon>Saccharomycetales</taxon>
        <taxon>Saccharomycetaceae</taxon>
        <taxon>Saccharomyces</taxon>
    </lineage>
</organism>
<dbReference type="EMBL" id="U28372">
    <property type="protein sequence ID" value="AAB64799.1"/>
    <property type="status" value="ALT_FRAME"/>
    <property type="molecule type" value="Genomic_DNA"/>
</dbReference>
<dbReference type="PIR" id="S69745">
    <property type="entry name" value="S69745"/>
</dbReference>
<dbReference type="STRING" id="4932.YDR360W"/>
<dbReference type="PaxDb" id="4932-YDR360W"/>
<dbReference type="EnsemblFungi" id="YDR360W_mRNA">
    <property type="protein sequence ID" value="YDR360W"/>
    <property type="gene ID" value="YDR360W"/>
</dbReference>
<dbReference type="AGR" id="SGD:S000002768"/>
<dbReference type="SGD" id="S000002768">
    <property type="gene designation" value="OPI7"/>
</dbReference>
<dbReference type="HOGENOM" id="CLU_1797953_0_0_1"/>
<name>OPI7_YEAST</name>
<accession>P87286</accession>
<feature type="chain" id="PRO_0000299777" description="Putative uncharacterized protein OPI7">
    <location>
        <begin position="1"/>
        <end position="144"/>
    </location>
</feature>
<comment type="disruption phenotype">
    <text evidence="1">Deletion leads to overproduction and excretion of inositol into the growth medium.</text>
</comment>
<comment type="miscellaneous">
    <text evidence="2">Partially overlaps VID21. Disruption phenotypes caused by deletion of this gene may also be a result of a defect in its overlapping gene.</text>
</comment>
<comment type="caution">
    <text evidence="3">Product of a dubious gene prediction unlikely to encode a functional protein. Because of that it is not part of the S.cerevisiae S288c complete/reference proteome set.</text>
</comment>
<comment type="sequence caution" evidence="2">
    <conflict type="frameshift">
        <sequence resource="EMBL-CDS" id="AAB64799"/>
    </conflict>
</comment>
<reference key="1">
    <citation type="journal article" date="1997" name="Nature">
        <title>The nucleotide sequence of Saccharomyces cerevisiae chromosome IV.</title>
        <authorList>
            <person name="Jacq C."/>
            <person name="Alt-Moerbe J."/>
            <person name="Andre B."/>
            <person name="Arnold W."/>
            <person name="Bahr A."/>
            <person name="Ballesta J.P.G."/>
            <person name="Bargues M."/>
            <person name="Baron L."/>
            <person name="Becker A."/>
            <person name="Biteau N."/>
            <person name="Bloecker H."/>
            <person name="Blugeon C."/>
            <person name="Boskovic J."/>
            <person name="Brandt P."/>
            <person name="Brueckner M."/>
            <person name="Buitrago M.J."/>
            <person name="Coster F."/>
            <person name="Delaveau T."/>
            <person name="del Rey F."/>
            <person name="Dujon B."/>
            <person name="Eide L.G."/>
            <person name="Garcia-Cantalejo J.M."/>
            <person name="Goffeau A."/>
            <person name="Gomez-Peris A."/>
            <person name="Granotier C."/>
            <person name="Hanemann V."/>
            <person name="Hankeln T."/>
            <person name="Hoheisel J.D."/>
            <person name="Jaeger W."/>
            <person name="Jimenez A."/>
            <person name="Jonniaux J.-L."/>
            <person name="Kraemer C."/>
            <person name="Kuester H."/>
            <person name="Laamanen P."/>
            <person name="Legros Y."/>
            <person name="Louis E.J."/>
            <person name="Moeller-Rieker S."/>
            <person name="Monnet A."/>
            <person name="Moro M."/>
            <person name="Mueller-Auer S."/>
            <person name="Nussbaumer B."/>
            <person name="Paricio N."/>
            <person name="Paulin L."/>
            <person name="Perea J."/>
            <person name="Perez-Alonso M."/>
            <person name="Perez-Ortin J.E."/>
            <person name="Pohl T.M."/>
            <person name="Prydz H."/>
            <person name="Purnelle B."/>
            <person name="Rasmussen S.W."/>
            <person name="Remacha M.A."/>
            <person name="Revuelta J.L."/>
            <person name="Rieger M."/>
            <person name="Salom D."/>
            <person name="Saluz H.P."/>
            <person name="Saiz J.E."/>
            <person name="Saren A.-M."/>
            <person name="Schaefer M."/>
            <person name="Scharfe M."/>
            <person name="Schmidt E.R."/>
            <person name="Schneider C."/>
            <person name="Scholler P."/>
            <person name="Schwarz S."/>
            <person name="Soler-Mira A."/>
            <person name="Urrestarazu L.A."/>
            <person name="Verhasselt P."/>
            <person name="Vissers S."/>
            <person name="Voet M."/>
            <person name="Volckaert G."/>
            <person name="Wagner G."/>
            <person name="Wambutt R."/>
            <person name="Wedler E."/>
            <person name="Wedler H."/>
            <person name="Woelfl S."/>
            <person name="Harris D.E."/>
            <person name="Bowman S."/>
            <person name="Brown D."/>
            <person name="Churcher C.M."/>
            <person name="Connor R."/>
            <person name="Dedman K."/>
            <person name="Gentles S."/>
            <person name="Hamlin N."/>
            <person name="Hunt S."/>
            <person name="Jones L."/>
            <person name="McDonald S."/>
            <person name="Murphy L.D."/>
            <person name="Niblett D."/>
            <person name="Odell C."/>
            <person name="Oliver K."/>
            <person name="Rajandream M.A."/>
            <person name="Richards C."/>
            <person name="Shore L."/>
            <person name="Walsh S.V."/>
            <person name="Barrell B.G."/>
            <person name="Dietrich F.S."/>
            <person name="Mulligan J.T."/>
            <person name="Allen E."/>
            <person name="Araujo R."/>
            <person name="Aviles E."/>
            <person name="Berno A."/>
            <person name="Carpenter J."/>
            <person name="Chen E."/>
            <person name="Cherry J.M."/>
            <person name="Chung E."/>
            <person name="Duncan M."/>
            <person name="Hunicke-Smith S."/>
            <person name="Hyman R.W."/>
            <person name="Komp C."/>
            <person name="Lashkari D."/>
            <person name="Lew H."/>
            <person name="Lin D."/>
            <person name="Mosedale D."/>
            <person name="Nakahara K."/>
            <person name="Namath A."/>
            <person name="Oefner P."/>
            <person name="Oh C."/>
            <person name="Petel F.X."/>
            <person name="Roberts D."/>
            <person name="Schramm S."/>
            <person name="Schroeder M."/>
            <person name="Shogren T."/>
            <person name="Shroff N."/>
            <person name="Winant A."/>
            <person name="Yelton M.A."/>
            <person name="Botstein D."/>
            <person name="Davis R.W."/>
            <person name="Johnston M."/>
            <person name="Andrews S."/>
            <person name="Brinkman R."/>
            <person name="Cooper J."/>
            <person name="Ding H."/>
            <person name="Du Z."/>
            <person name="Favello A."/>
            <person name="Fulton L."/>
            <person name="Gattung S."/>
            <person name="Greco T."/>
            <person name="Hallsworth K."/>
            <person name="Hawkins J."/>
            <person name="Hillier L.W."/>
            <person name="Jier M."/>
            <person name="Johnson D."/>
            <person name="Johnston L."/>
            <person name="Kirsten J."/>
            <person name="Kucaba T."/>
            <person name="Langston Y."/>
            <person name="Latreille P."/>
            <person name="Le T."/>
            <person name="Mardis E."/>
            <person name="Menezes S."/>
            <person name="Miller N."/>
            <person name="Nhan M."/>
            <person name="Pauley A."/>
            <person name="Peluso D."/>
            <person name="Rifkin L."/>
            <person name="Riles L."/>
            <person name="Taich A."/>
            <person name="Trevaskis E."/>
            <person name="Vignati D."/>
            <person name="Wilcox L."/>
            <person name="Wohldman P."/>
            <person name="Vaudin M."/>
            <person name="Wilson R."/>
            <person name="Waterston R."/>
            <person name="Albermann K."/>
            <person name="Hani J."/>
            <person name="Heumann K."/>
            <person name="Kleine K."/>
            <person name="Mewes H.-W."/>
            <person name="Zollner A."/>
            <person name="Zaccaria P."/>
        </authorList>
    </citation>
    <scope>NUCLEOTIDE SEQUENCE [LARGE SCALE GENOMIC DNA]</scope>
    <source>
        <strain>ATCC 204508 / S288c</strain>
    </source>
</reference>
<reference key="2">
    <citation type="journal article" date="2014" name="G3 (Bethesda)">
        <title>The reference genome sequence of Saccharomyces cerevisiae: Then and now.</title>
        <authorList>
            <person name="Engel S.R."/>
            <person name="Dietrich F.S."/>
            <person name="Fisk D.G."/>
            <person name="Binkley G."/>
            <person name="Balakrishnan R."/>
            <person name="Costanzo M.C."/>
            <person name="Dwight S.S."/>
            <person name="Hitz B.C."/>
            <person name="Karra K."/>
            <person name="Nash R.S."/>
            <person name="Weng S."/>
            <person name="Wong E.D."/>
            <person name="Lloyd P."/>
            <person name="Skrzypek M.S."/>
            <person name="Miyasato S.R."/>
            <person name="Simison M."/>
            <person name="Cherry J.M."/>
        </authorList>
    </citation>
    <scope>GENOME REANNOTATION</scope>
    <scope>SEQUENCE REVISION TO 122</scope>
    <source>
        <strain>ATCC 204508 / S288c</strain>
    </source>
</reference>
<reference key="3">
    <citation type="journal article" date="2006" name="Genetics">
        <title>Genomic analysis of the Opi- phenotype.</title>
        <authorList>
            <person name="Hancock L.C."/>
            <person name="Behta R.P."/>
            <person name="Lopes J.M."/>
        </authorList>
    </citation>
    <scope>DISRUPTION PHENOTYPE</scope>
</reference>
<protein>
    <recommendedName>
        <fullName>Putative uncharacterized protein OPI7</fullName>
    </recommendedName>
</protein>
<proteinExistence type="uncertain"/>
<gene>
    <name type="primary">OPI7</name>
    <name type="ordered locus">YDR360W</name>
</gene>
<evidence type="ECO:0000269" key="1">
    <source>
    </source>
</evidence>
<evidence type="ECO:0000305" key="2"/>
<evidence type="ECO:0000305" key="3">
    <source>
    </source>
</evidence>
<sequence length="144" mass="15970">MGVAAVCRSFGSDASSNLIPLRISFFFKNASISFRSLFSSVNSSSWFKRDTQYSSVSFLSLSSIKSSALGNLLLSLLWSSLSDAELGTAELGREDIFEAETVLLIMMSLNNLYILSVRRLTPTGNSRPLKISRLQQVRKNPYPF</sequence>